<keyword id="KW-0150">Chloroplast</keyword>
<keyword id="KW-0934">Plastid</keyword>
<keyword id="KW-0687">Ribonucleoprotein</keyword>
<keyword id="KW-0689">Ribosomal protein</keyword>
<keyword id="KW-0694">RNA-binding</keyword>
<keyword id="KW-0699">rRNA-binding</keyword>
<geneLocation type="chloroplast"/>
<accession>O20103</accession>
<name>RR4_CROSP</name>
<gene>
    <name type="primary">rps4</name>
</gene>
<dbReference type="EMBL" id="Z68236">
    <property type="protein sequence ID" value="CAA92534.1"/>
    <property type="molecule type" value="Genomic_DNA"/>
</dbReference>
<dbReference type="SMR" id="O20103"/>
<dbReference type="GO" id="GO:0009507">
    <property type="term" value="C:chloroplast"/>
    <property type="evidence" value="ECO:0007669"/>
    <property type="project" value="UniProtKB-SubCell"/>
</dbReference>
<dbReference type="GO" id="GO:0015935">
    <property type="term" value="C:small ribosomal subunit"/>
    <property type="evidence" value="ECO:0007669"/>
    <property type="project" value="InterPro"/>
</dbReference>
<dbReference type="GO" id="GO:0019843">
    <property type="term" value="F:rRNA binding"/>
    <property type="evidence" value="ECO:0007669"/>
    <property type="project" value="UniProtKB-KW"/>
</dbReference>
<dbReference type="GO" id="GO:0003735">
    <property type="term" value="F:structural constituent of ribosome"/>
    <property type="evidence" value="ECO:0007669"/>
    <property type="project" value="InterPro"/>
</dbReference>
<dbReference type="GO" id="GO:0042274">
    <property type="term" value="P:ribosomal small subunit biogenesis"/>
    <property type="evidence" value="ECO:0007669"/>
    <property type="project" value="TreeGrafter"/>
</dbReference>
<dbReference type="GO" id="GO:0006412">
    <property type="term" value="P:translation"/>
    <property type="evidence" value="ECO:0007669"/>
    <property type="project" value="InterPro"/>
</dbReference>
<dbReference type="CDD" id="cd00165">
    <property type="entry name" value="S4"/>
    <property type="match status" value="1"/>
</dbReference>
<dbReference type="FunFam" id="1.10.1050.10:FF:000002">
    <property type="entry name" value="30S ribosomal protein S4, chloroplastic"/>
    <property type="match status" value="1"/>
</dbReference>
<dbReference type="FunFam" id="3.10.290.10:FF:000081">
    <property type="entry name" value="30S ribosomal protein S4, chloroplastic"/>
    <property type="match status" value="1"/>
</dbReference>
<dbReference type="Gene3D" id="1.10.1050.10">
    <property type="entry name" value="Ribosomal Protein S4 Delta 41, Chain A, domain 1"/>
    <property type="match status" value="1"/>
</dbReference>
<dbReference type="Gene3D" id="3.10.290.10">
    <property type="entry name" value="RNA-binding S4 domain"/>
    <property type="match status" value="1"/>
</dbReference>
<dbReference type="HAMAP" id="MF_01306_B">
    <property type="entry name" value="Ribosomal_uS4_B"/>
    <property type="match status" value="1"/>
</dbReference>
<dbReference type="InterPro" id="IPR022801">
    <property type="entry name" value="Ribosomal_uS4"/>
</dbReference>
<dbReference type="InterPro" id="IPR005709">
    <property type="entry name" value="Ribosomal_uS4_bac-type"/>
</dbReference>
<dbReference type="InterPro" id="IPR018079">
    <property type="entry name" value="Ribosomal_uS4_CS"/>
</dbReference>
<dbReference type="InterPro" id="IPR001912">
    <property type="entry name" value="Ribosomal_uS4_N"/>
</dbReference>
<dbReference type="InterPro" id="IPR002942">
    <property type="entry name" value="S4_RNA-bd"/>
</dbReference>
<dbReference type="InterPro" id="IPR036986">
    <property type="entry name" value="S4_RNA-bd_sf"/>
</dbReference>
<dbReference type="NCBIfam" id="NF003717">
    <property type="entry name" value="PRK05327.1"/>
    <property type="match status" value="1"/>
</dbReference>
<dbReference type="NCBIfam" id="TIGR01017">
    <property type="entry name" value="rpsD_bact"/>
    <property type="match status" value="1"/>
</dbReference>
<dbReference type="PANTHER" id="PTHR11831">
    <property type="entry name" value="30S 40S RIBOSOMAL PROTEIN"/>
    <property type="match status" value="1"/>
</dbReference>
<dbReference type="PANTHER" id="PTHR11831:SF4">
    <property type="entry name" value="SMALL RIBOSOMAL SUBUNIT PROTEIN US4M"/>
    <property type="match status" value="1"/>
</dbReference>
<dbReference type="Pfam" id="PF00163">
    <property type="entry name" value="Ribosomal_S4"/>
    <property type="match status" value="1"/>
</dbReference>
<dbReference type="Pfam" id="PF01479">
    <property type="entry name" value="S4"/>
    <property type="match status" value="1"/>
</dbReference>
<dbReference type="SMART" id="SM01390">
    <property type="entry name" value="Ribosomal_S4"/>
    <property type="match status" value="1"/>
</dbReference>
<dbReference type="SMART" id="SM00363">
    <property type="entry name" value="S4"/>
    <property type="match status" value="1"/>
</dbReference>
<dbReference type="SUPFAM" id="SSF55174">
    <property type="entry name" value="Alpha-L RNA-binding motif"/>
    <property type="match status" value="1"/>
</dbReference>
<dbReference type="PROSITE" id="PS00632">
    <property type="entry name" value="RIBOSOMAL_S4"/>
    <property type="match status" value="1"/>
</dbReference>
<dbReference type="PROSITE" id="PS50889">
    <property type="entry name" value="S4"/>
    <property type="match status" value="1"/>
</dbReference>
<comment type="function">
    <text evidence="1">One of the primary rRNA binding proteins, it binds directly to 16S rRNA where it nucleates assembly of the body of the 30S subunit.</text>
</comment>
<comment type="function">
    <text evidence="1">With S5 and S12 plays an important role in translational accuracy.</text>
</comment>
<comment type="subunit">
    <text evidence="1">Part of the 30S ribosomal subunit. Contacts protein S5. The interaction surface between S4 and S5 is involved in control of translational fidelity (By similarity).</text>
</comment>
<comment type="subcellular location">
    <subcellularLocation>
        <location>Plastid</location>
        <location>Chloroplast</location>
    </subcellularLocation>
</comment>
<comment type="similarity">
    <text evidence="2">Belongs to the universal ribosomal protein uS4 family.</text>
</comment>
<protein>
    <recommendedName>
        <fullName evidence="2">Small ribosomal subunit protein uS4c</fullName>
    </recommendedName>
    <alternativeName>
        <fullName>30S ribosomal protein S4, chloroplastic</fullName>
    </alternativeName>
</protein>
<sequence length="183" mass="21124">RFKKIRRLGALPGLTSKRPRSGSDLKNQLRSGKRSQYRIRLEEKQKLRFHYGLTERQLLKYVHIAGKAKGSTGQILLQLLEMRLDNILFRLGMASTIPGARQLVNHRHILVNGRIVDIPSYRCKPRDIITTNNKQRSKALIQNFIASSPHQEELPNHLTIDPFQYKGLVNQIIDSKWIGLKIN</sequence>
<feature type="chain" id="PRO_0000132559" description="Small ribosomal subunit protein uS4c">
    <location>
        <begin position="1" status="less than"/>
        <end position="183" status="greater than"/>
    </location>
</feature>
<feature type="domain" description="S4 RNA-binding">
    <location>
        <begin position="82"/>
        <end position="143"/>
    </location>
</feature>
<feature type="non-terminal residue">
    <location>
        <position position="1"/>
    </location>
</feature>
<feature type="non-terminal residue">
    <location>
        <position position="183"/>
    </location>
</feature>
<evidence type="ECO:0000250" key="1"/>
<evidence type="ECO:0000305" key="2"/>
<reference key="1">
    <citation type="journal article" date="1997" name="Plant Syst. Evol.">
        <title>Phylogenetic analysis of Iridaceae with parsimony and distance methods using the plastid gene rps4.</title>
        <authorList>
            <person name="Souza-Chies T.T."/>
            <person name="Bittar G."/>
            <person name="Nadot S."/>
            <person name="Carter L."/>
            <person name="Besin E."/>
            <person name="Lejeune B.P."/>
        </authorList>
    </citation>
    <scope>NUCLEOTIDE SEQUENCE [GENOMIC DNA]</scope>
</reference>
<proteinExistence type="inferred from homology"/>
<organism>
    <name type="scientific">Crocosmia sp. (strain Porto Alegre 034)</name>
    <dbReference type="NCBI Taxonomy" id="58948"/>
    <lineage>
        <taxon>Eukaryota</taxon>
        <taxon>Viridiplantae</taxon>
        <taxon>Streptophyta</taxon>
        <taxon>Embryophyta</taxon>
        <taxon>Tracheophyta</taxon>
        <taxon>Spermatophyta</taxon>
        <taxon>Magnoliopsida</taxon>
        <taxon>Liliopsida</taxon>
        <taxon>Asparagales</taxon>
        <taxon>Iridaceae</taxon>
        <taxon>Crocoideae</taxon>
        <taxon>Freesieae</taxon>
        <taxon>Crocosmia</taxon>
    </lineage>
</organism>